<name>IR3IP_DANRE</name>
<organism>
    <name type="scientific">Danio rerio</name>
    <name type="common">Zebrafish</name>
    <name type="synonym">Brachydanio rerio</name>
    <dbReference type="NCBI Taxonomy" id="7955"/>
    <lineage>
        <taxon>Eukaryota</taxon>
        <taxon>Metazoa</taxon>
        <taxon>Chordata</taxon>
        <taxon>Craniata</taxon>
        <taxon>Vertebrata</taxon>
        <taxon>Euteleostomi</taxon>
        <taxon>Actinopterygii</taxon>
        <taxon>Neopterygii</taxon>
        <taxon>Teleostei</taxon>
        <taxon>Ostariophysi</taxon>
        <taxon>Cypriniformes</taxon>
        <taxon>Danionidae</taxon>
        <taxon>Danioninae</taxon>
        <taxon>Danio</taxon>
    </lineage>
</organism>
<accession>Q4VBI2</accession>
<sequence>MAFTLYALIQTAILFTNAIAVLHEERFLSKIGWGAEQGVGGFGDDPGIKAQLLNLIRSVRTVMRVPLIAVNSVCIVLLLLFG</sequence>
<evidence type="ECO:0000250" key="1">
    <source>
        <dbReference type="UniProtKB" id="Q9CR20"/>
    </source>
</evidence>
<evidence type="ECO:0000250" key="2">
    <source>
        <dbReference type="UniProtKB" id="Q9Y5U9"/>
    </source>
</evidence>
<evidence type="ECO:0000255" key="3"/>
<evidence type="ECO:0000303" key="4">
    <source ref="1"/>
</evidence>
<evidence type="ECO:0000305" key="5"/>
<evidence type="ECO:0000312" key="6">
    <source>
        <dbReference type="EMBL" id="AAH95786.1"/>
    </source>
</evidence>
<feature type="chain" id="PRO_0000257964" description="Immediate early response 3-interacting protein 1">
    <location>
        <begin position="1"/>
        <end position="82"/>
    </location>
</feature>
<feature type="transmembrane region" description="Helical" evidence="3">
    <location>
        <begin position="2"/>
        <end position="22"/>
    </location>
</feature>
<feature type="transmembrane region" description="Helical" evidence="3">
    <location>
        <begin position="62"/>
        <end position="82"/>
    </location>
</feature>
<comment type="function">
    <text evidence="1 2">Regulator of endoplasmic reticulum secretion that acts as a key determinant of brain size. Required for secretion of extracellular matrix proteins. Required for correct brain development by depositing sufficient extracellular matrix proteins for tissue integrity and the proliferation of neural progenitors (By similarity). Acts as a regulator of the unfolded protein response (UPR) (By similarity).</text>
</comment>
<comment type="subcellular location">
    <subcellularLocation>
        <location evidence="2">Endoplasmic reticulum membrane</location>
        <topology evidence="3">Multi-pass membrane protein</topology>
    </subcellularLocation>
</comment>
<comment type="similarity">
    <text evidence="5">Belongs to the YOS1 family.</text>
</comment>
<gene>
    <name evidence="2" type="primary">ier3ip1</name>
    <name evidence="4" type="ORF">zgc:112367</name>
</gene>
<protein>
    <recommendedName>
        <fullName evidence="5">Immediate early response 3-interacting protein 1</fullName>
    </recommendedName>
</protein>
<keyword id="KW-0256">Endoplasmic reticulum</keyword>
<keyword id="KW-0472">Membrane</keyword>
<keyword id="KW-0653">Protein transport</keyword>
<keyword id="KW-1185">Reference proteome</keyword>
<keyword id="KW-0812">Transmembrane</keyword>
<keyword id="KW-1133">Transmembrane helix</keyword>
<keyword id="KW-0813">Transport</keyword>
<reference key="1">
    <citation type="submission" date="2005-05" db="EMBL/GenBank/DDBJ databases">
        <authorList>
            <consortium name="NIH - Zebrafish Gene Collection (ZGC) project"/>
        </authorList>
    </citation>
    <scope>NUCLEOTIDE SEQUENCE [LARGE SCALE MRNA]</scope>
    <source>
        <tissue evidence="6">Brain</tissue>
    </source>
</reference>
<proteinExistence type="inferred from homology"/>
<dbReference type="EMBL" id="BC095786">
    <property type="protein sequence ID" value="AAH95786.1"/>
    <property type="molecule type" value="mRNA"/>
</dbReference>
<dbReference type="RefSeq" id="NP_001239302.1">
    <property type="nucleotide sequence ID" value="NM_001252373.3"/>
</dbReference>
<dbReference type="SMR" id="Q4VBI2"/>
<dbReference type="FunCoup" id="Q4VBI2">
    <property type="interactions" value="893"/>
</dbReference>
<dbReference type="STRING" id="7955.ENSDARP00000057864"/>
<dbReference type="PaxDb" id="7955-ENSDARP00000057864"/>
<dbReference type="Ensembl" id="ENSDART00000057865">
    <property type="protein sequence ID" value="ENSDARP00000057864"/>
    <property type="gene ID" value="ENSDARG00000039601"/>
</dbReference>
<dbReference type="GeneID" id="554110"/>
<dbReference type="KEGG" id="dre:554110"/>
<dbReference type="AGR" id="ZFIN:ZDB-GENE-050506-106"/>
<dbReference type="CTD" id="51124"/>
<dbReference type="ZFIN" id="ZDB-GENE-050506-106">
    <property type="gene designation" value="ier3ip1"/>
</dbReference>
<dbReference type="eggNOG" id="KOG4779">
    <property type="taxonomic scope" value="Eukaryota"/>
</dbReference>
<dbReference type="HOGENOM" id="CLU_152125_3_0_1"/>
<dbReference type="InParanoid" id="Q4VBI2"/>
<dbReference type="OMA" id="VQTVMRM"/>
<dbReference type="OrthoDB" id="15356at2759"/>
<dbReference type="PhylomeDB" id="Q4VBI2"/>
<dbReference type="TreeFam" id="TF300263"/>
<dbReference type="PRO" id="PR:Q4VBI2"/>
<dbReference type="Proteomes" id="UP000000437">
    <property type="component" value="Chromosome 10"/>
</dbReference>
<dbReference type="Bgee" id="ENSDARG00000039601">
    <property type="expression patterns" value="Expressed in mature ovarian follicle and 26 other cell types or tissues"/>
</dbReference>
<dbReference type="GO" id="GO:0030134">
    <property type="term" value="C:COPII-coated ER to Golgi transport vesicle"/>
    <property type="evidence" value="ECO:0000318"/>
    <property type="project" value="GO_Central"/>
</dbReference>
<dbReference type="GO" id="GO:0005789">
    <property type="term" value="C:endoplasmic reticulum membrane"/>
    <property type="evidence" value="ECO:0000250"/>
    <property type="project" value="UniProtKB"/>
</dbReference>
<dbReference type="GO" id="GO:0000139">
    <property type="term" value="C:Golgi membrane"/>
    <property type="evidence" value="ECO:0000318"/>
    <property type="project" value="GO_Central"/>
</dbReference>
<dbReference type="GO" id="GO:0007420">
    <property type="term" value="P:brain development"/>
    <property type="evidence" value="ECO:0000250"/>
    <property type="project" value="UniProtKB"/>
</dbReference>
<dbReference type="GO" id="GO:0006888">
    <property type="term" value="P:endoplasmic reticulum to Golgi vesicle-mediated transport"/>
    <property type="evidence" value="ECO:0000318"/>
    <property type="project" value="GO_Central"/>
</dbReference>
<dbReference type="GO" id="GO:0035265">
    <property type="term" value="P:organ growth"/>
    <property type="evidence" value="ECO:0000250"/>
    <property type="project" value="UniProtKB"/>
</dbReference>
<dbReference type="GO" id="GO:0003331">
    <property type="term" value="P:positive regulation of extracellular matrix constituent secretion"/>
    <property type="evidence" value="ECO:0000250"/>
    <property type="project" value="UniProtKB"/>
</dbReference>
<dbReference type="GO" id="GO:0050714">
    <property type="term" value="P:positive regulation of protein secretion"/>
    <property type="evidence" value="ECO:0000250"/>
    <property type="project" value="UniProtKB"/>
</dbReference>
<dbReference type="GO" id="GO:0015031">
    <property type="term" value="P:protein transport"/>
    <property type="evidence" value="ECO:0007669"/>
    <property type="project" value="UniProtKB-KW"/>
</dbReference>
<dbReference type="InterPro" id="IPR013880">
    <property type="entry name" value="Yos1"/>
</dbReference>
<dbReference type="PANTHER" id="PTHR15858">
    <property type="entry name" value="IMMEDIATE EARLY RESPONSE 3-INTERACTING PROTEIN 1"/>
    <property type="match status" value="1"/>
</dbReference>
<dbReference type="PANTHER" id="PTHR15858:SF0">
    <property type="entry name" value="IMMEDIATE EARLY RESPONSE 3-INTERACTING PROTEIN 1"/>
    <property type="match status" value="1"/>
</dbReference>
<dbReference type="Pfam" id="PF08571">
    <property type="entry name" value="Yos1"/>
    <property type="match status" value="1"/>
</dbReference>